<feature type="chain" id="PRO_1000184793" description="ATP synthase subunit delta">
    <location>
        <begin position="1"/>
        <end position="177"/>
    </location>
</feature>
<gene>
    <name evidence="1" type="primary">atpH</name>
    <name type="ordered locus">Spea_4243</name>
</gene>
<protein>
    <recommendedName>
        <fullName evidence="1">ATP synthase subunit delta</fullName>
    </recommendedName>
    <alternativeName>
        <fullName evidence="1">ATP synthase F(1) sector subunit delta</fullName>
    </alternativeName>
    <alternativeName>
        <fullName evidence="1">F-type ATPase subunit delta</fullName>
        <shortName evidence="1">F-ATPase subunit delta</shortName>
    </alternativeName>
</protein>
<sequence length="177" mass="19116">MAEITTIARPYAKAAFDFALEQKAVESWAEMLNFAALVSENETMQPLLSGSVASGKLAELFIGVCGEQINEQAQNLLKVMAENGRLVVLPAVAQQFVEMQREYAKEVEAQIVSATELTSEQLQALSVSLEKRLARKVKLNCSIDTSLIAGVIITAGDLVIDGSVRGKISRLSDSLQS</sequence>
<reference key="1">
    <citation type="submission" date="2007-10" db="EMBL/GenBank/DDBJ databases">
        <title>Complete sequence of Shewanella pealeana ATCC 700345.</title>
        <authorList>
            <consortium name="US DOE Joint Genome Institute"/>
            <person name="Copeland A."/>
            <person name="Lucas S."/>
            <person name="Lapidus A."/>
            <person name="Barry K."/>
            <person name="Glavina del Rio T."/>
            <person name="Dalin E."/>
            <person name="Tice H."/>
            <person name="Pitluck S."/>
            <person name="Chertkov O."/>
            <person name="Brettin T."/>
            <person name="Bruce D."/>
            <person name="Detter J.C."/>
            <person name="Han C."/>
            <person name="Schmutz J."/>
            <person name="Larimer F."/>
            <person name="Land M."/>
            <person name="Hauser L."/>
            <person name="Kyrpides N."/>
            <person name="Kim E."/>
            <person name="Zhao J.-S.Z."/>
            <person name="Manno D."/>
            <person name="Hawari J."/>
            <person name="Richardson P."/>
        </authorList>
    </citation>
    <scope>NUCLEOTIDE SEQUENCE [LARGE SCALE GENOMIC DNA]</scope>
    <source>
        <strain>ATCC 700345 / ANG-SQ1</strain>
    </source>
</reference>
<organism>
    <name type="scientific">Shewanella pealeana (strain ATCC 700345 / ANG-SQ1)</name>
    <dbReference type="NCBI Taxonomy" id="398579"/>
    <lineage>
        <taxon>Bacteria</taxon>
        <taxon>Pseudomonadati</taxon>
        <taxon>Pseudomonadota</taxon>
        <taxon>Gammaproteobacteria</taxon>
        <taxon>Alteromonadales</taxon>
        <taxon>Shewanellaceae</taxon>
        <taxon>Shewanella</taxon>
    </lineage>
</organism>
<keyword id="KW-0066">ATP synthesis</keyword>
<keyword id="KW-0997">Cell inner membrane</keyword>
<keyword id="KW-1003">Cell membrane</keyword>
<keyword id="KW-0139">CF(1)</keyword>
<keyword id="KW-0375">Hydrogen ion transport</keyword>
<keyword id="KW-0406">Ion transport</keyword>
<keyword id="KW-0472">Membrane</keyword>
<keyword id="KW-1185">Reference proteome</keyword>
<keyword id="KW-0813">Transport</keyword>
<accession>A8HAG6</accession>
<dbReference type="EMBL" id="CP000851">
    <property type="protein sequence ID" value="ABV89553.1"/>
    <property type="molecule type" value="Genomic_DNA"/>
</dbReference>
<dbReference type="RefSeq" id="WP_012157430.1">
    <property type="nucleotide sequence ID" value="NC_009901.1"/>
</dbReference>
<dbReference type="SMR" id="A8HAG6"/>
<dbReference type="STRING" id="398579.Spea_4243"/>
<dbReference type="KEGG" id="spl:Spea_4243"/>
<dbReference type="eggNOG" id="COG0712">
    <property type="taxonomic scope" value="Bacteria"/>
</dbReference>
<dbReference type="HOGENOM" id="CLU_085114_3_0_6"/>
<dbReference type="OrthoDB" id="9816221at2"/>
<dbReference type="Proteomes" id="UP000002608">
    <property type="component" value="Chromosome"/>
</dbReference>
<dbReference type="GO" id="GO:0005886">
    <property type="term" value="C:plasma membrane"/>
    <property type="evidence" value="ECO:0007669"/>
    <property type="project" value="UniProtKB-SubCell"/>
</dbReference>
<dbReference type="GO" id="GO:0045259">
    <property type="term" value="C:proton-transporting ATP synthase complex"/>
    <property type="evidence" value="ECO:0007669"/>
    <property type="project" value="UniProtKB-KW"/>
</dbReference>
<dbReference type="GO" id="GO:0046933">
    <property type="term" value="F:proton-transporting ATP synthase activity, rotational mechanism"/>
    <property type="evidence" value="ECO:0007669"/>
    <property type="project" value="UniProtKB-UniRule"/>
</dbReference>
<dbReference type="Gene3D" id="1.10.520.20">
    <property type="entry name" value="N-terminal domain of the delta subunit of the F1F0-ATP synthase"/>
    <property type="match status" value="1"/>
</dbReference>
<dbReference type="HAMAP" id="MF_01416">
    <property type="entry name" value="ATP_synth_delta_bact"/>
    <property type="match status" value="1"/>
</dbReference>
<dbReference type="InterPro" id="IPR026015">
    <property type="entry name" value="ATP_synth_OSCP/delta_N_sf"/>
</dbReference>
<dbReference type="InterPro" id="IPR000711">
    <property type="entry name" value="ATPase_OSCP/dsu"/>
</dbReference>
<dbReference type="NCBIfam" id="TIGR01145">
    <property type="entry name" value="ATP_synt_delta"/>
    <property type="match status" value="1"/>
</dbReference>
<dbReference type="NCBIfam" id="NF004402">
    <property type="entry name" value="PRK05758.2-2"/>
    <property type="match status" value="1"/>
</dbReference>
<dbReference type="NCBIfam" id="NF004404">
    <property type="entry name" value="PRK05758.2-5"/>
    <property type="match status" value="1"/>
</dbReference>
<dbReference type="PANTHER" id="PTHR11910">
    <property type="entry name" value="ATP SYNTHASE DELTA CHAIN"/>
    <property type="match status" value="1"/>
</dbReference>
<dbReference type="Pfam" id="PF00213">
    <property type="entry name" value="OSCP"/>
    <property type="match status" value="1"/>
</dbReference>
<dbReference type="PRINTS" id="PR00125">
    <property type="entry name" value="ATPASEDELTA"/>
</dbReference>
<dbReference type="SUPFAM" id="SSF47928">
    <property type="entry name" value="N-terminal domain of the delta subunit of the F1F0-ATP synthase"/>
    <property type="match status" value="1"/>
</dbReference>
<comment type="function">
    <text evidence="1">F(1)F(0) ATP synthase produces ATP from ADP in the presence of a proton or sodium gradient. F-type ATPases consist of two structural domains, F(1) containing the extramembraneous catalytic core and F(0) containing the membrane proton channel, linked together by a central stalk and a peripheral stalk. During catalysis, ATP synthesis in the catalytic domain of F(1) is coupled via a rotary mechanism of the central stalk subunits to proton translocation.</text>
</comment>
<comment type="function">
    <text evidence="1">This protein is part of the stalk that links CF(0) to CF(1). It either transmits conformational changes from CF(0) to CF(1) or is implicated in proton conduction.</text>
</comment>
<comment type="subunit">
    <text evidence="1">F-type ATPases have 2 components, F(1) - the catalytic core - and F(0) - the membrane proton channel. F(1) has five subunits: alpha(3), beta(3), gamma(1), delta(1), epsilon(1). F(0) has three main subunits: a(1), b(2) and c(10-14). The alpha and beta chains form an alternating ring which encloses part of the gamma chain. F(1) is attached to F(0) by a central stalk formed by the gamma and epsilon chains, while a peripheral stalk is formed by the delta and b chains.</text>
</comment>
<comment type="subcellular location">
    <subcellularLocation>
        <location evidence="1">Cell inner membrane</location>
        <topology evidence="1">Peripheral membrane protein</topology>
    </subcellularLocation>
</comment>
<comment type="similarity">
    <text evidence="1">Belongs to the ATPase delta chain family.</text>
</comment>
<proteinExistence type="inferred from homology"/>
<evidence type="ECO:0000255" key="1">
    <source>
        <dbReference type="HAMAP-Rule" id="MF_01416"/>
    </source>
</evidence>
<name>ATPD_SHEPA</name>